<sequence length="101" mass="11648">MAKLALIEREKKRARLAQKYAPKRAELKAIIDDASKSDEERYAARLELQQLPRNANPTRKRNRCAITGRPRGTFRKFGLARNKIREIAFRGEIPGLTKASW</sequence>
<protein>
    <recommendedName>
        <fullName evidence="1">Small ribosomal subunit protein uS14</fullName>
    </recommendedName>
    <alternativeName>
        <fullName evidence="2">30S ribosomal protein S14</fullName>
    </alternativeName>
</protein>
<gene>
    <name evidence="1" type="primary">rpsN</name>
    <name type="ordered locus">BURPS1106A_3791</name>
</gene>
<organism>
    <name type="scientific">Burkholderia pseudomallei (strain 1106a)</name>
    <dbReference type="NCBI Taxonomy" id="357348"/>
    <lineage>
        <taxon>Bacteria</taxon>
        <taxon>Pseudomonadati</taxon>
        <taxon>Pseudomonadota</taxon>
        <taxon>Betaproteobacteria</taxon>
        <taxon>Burkholderiales</taxon>
        <taxon>Burkholderiaceae</taxon>
        <taxon>Burkholderia</taxon>
        <taxon>pseudomallei group</taxon>
    </lineage>
</organism>
<name>RS14_BURP0</name>
<reference key="1">
    <citation type="journal article" date="2010" name="Genome Biol. Evol.">
        <title>Continuing evolution of Burkholderia mallei through genome reduction and large-scale rearrangements.</title>
        <authorList>
            <person name="Losada L."/>
            <person name="Ronning C.M."/>
            <person name="DeShazer D."/>
            <person name="Woods D."/>
            <person name="Fedorova N."/>
            <person name="Kim H.S."/>
            <person name="Shabalina S.A."/>
            <person name="Pearson T.R."/>
            <person name="Brinkac L."/>
            <person name="Tan P."/>
            <person name="Nandi T."/>
            <person name="Crabtree J."/>
            <person name="Badger J."/>
            <person name="Beckstrom-Sternberg S."/>
            <person name="Saqib M."/>
            <person name="Schutzer S.E."/>
            <person name="Keim P."/>
            <person name="Nierman W.C."/>
        </authorList>
    </citation>
    <scope>NUCLEOTIDE SEQUENCE [LARGE SCALE GENOMIC DNA]</scope>
    <source>
        <strain>1106a</strain>
    </source>
</reference>
<evidence type="ECO:0000255" key="1">
    <source>
        <dbReference type="HAMAP-Rule" id="MF_00537"/>
    </source>
</evidence>
<evidence type="ECO:0000305" key="2"/>
<keyword id="KW-0687">Ribonucleoprotein</keyword>
<keyword id="KW-0689">Ribosomal protein</keyword>
<keyword id="KW-0694">RNA-binding</keyword>
<keyword id="KW-0699">rRNA-binding</keyword>
<dbReference type="EMBL" id="CP000572">
    <property type="protein sequence ID" value="ABN90786.1"/>
    <property type="molecule type" value="Genomic_DNA"/>
</dbReference>
<dbReference type="RefSeq" id="WP_004197948.1">
    <property type="nucleotide sequence ID" value="NC_009076.1"/>
</dbReference>
<dbReference type="SMR" id="A3P0A0"/>
<dbReference type="GeneID" id="93061819"/>
<dbReference type="KEGG" id="bpl:BURPS1106A_3791"/>
<dbReference type="HOGENOM" id="CLU_139869_0_1_4"/>
<dbReference type="Proteomes" id="UP000006738">
    <property type="component" value="Chromosome I"/>
</dbReference>
<dbReference type="GO" id="GO:0005737">
    <property type="term" value="C:cytoplasm"/>
    <property type="evidence" value="ECO:0007669"/>
    <property type="project" value="UniProtKB-ARBA"/>
</dbReference>
<dbReference type="GO" id="GO:0015935">
    <property type="term" value="C:small ribosomal subunit"/>
    <property type="evidence" value="ECO:0007669"/>
    <property type="project" value="TreeGrafter"/>
</dbReference>
<dbReference type="GO" id="GO:0019843">
    <property type="term" value="F:rRNA binding"/>
    <property type="evidence" value="ECO:0007669"/>
    <property type="project" value="UniProtKB-UniRule"/>
</dbReference>
<dbReference type="GO" id="GO:0003735">
    <property type="term" value="F:structural constituent of ribosome"/>
    <property type="evidence" value="ECO:0007669"/>
    <property type="project" value="InterPro"/>
</dbReference>
<dbReference type="GO" id="GO:0006412">
    <property type="term" value="P:translation"/>
    <property type="evidence" value="ECO:0007669"/>
    <property type="project" value="UniProtKB-UniRule"/>
</dbReference>
<dbReference type="FunFam" id="1.10.287.1480:FF:000001">
    <property type="entry name" value="30S ribosomal protein S14"/>
    <property type="match status" value="1"/>
</dbReference>
<dbReference type="Gene3D" id="1.10.287.1480">
    <property type="match status" value="1"/>
</dbReference>
<dbReference type="HAMAP" id="MF_00537">
    <property type="entry name" value="Ribosomal_uS14_1"/>
    <property type="match status" value="1"/>
</dbReference>
<dbReference type="InterPro" id="IPR001209">
    <property type="entry name" value="Ribosomal_uS14"/>
</dbReference>
<dbReference type="InterPro" id="IPR023036">
    <property type="entry name" value="Ribosomal_uS14_bac/plastid"/>
</dbReference>
<dbReference type="NCBIfam" id="NF006477">
    <property type="entry name" value="PRK08881.1"/>
    <property type="match status" value="1"/>
</dbReference>
<dbReference type="PANTHER" id="PTHR19836">
    <property type="entry name" value="30S RIBOSOMAL PROTEIN S14"/>
    <property type="match status" value="1"/>
</dbReference>
<dbReference type="PANTHER" id="PTHR19836:SF19">
    <property type="entry name" value="SMALL RIBOSOMAL SUBUNIT PROTEIN US14M"/>
    <property type="match status" value="1"/>
</dbReference>
<dbReference type="Pfam" id="PF00253">
    <property type="entry name" value="Ribosomal_S14"/>
    <property type="match status" value="1"/>
</dbReference>
<dbReference type="SUPFAM" id="SSF57716">
    <property type="entry name" value="Glucocorticoid receptor-like (DNA-binding domain)"/>
    <property type="match status" value="1"/>
</dbReference>
<comment type="function">
    <text evidence="1">Binds 16S rRNA, required for the assembly of 30S particles and may also be responsible for determining the conformation of the 16S rRNA at the A site.</text>
</comment>
<comment type="subunit">
    <text evidence="1">Part of the 30S ribosomal subunit. Contacts proteins S3 and S10.</text>
</comment>
<comment type="similarity">
    <text evidence="1">Belongs to the universal ribosomal protein uS14 family.</text>
</comment>
<feature type="chain" id="PRO_1000128337" description="Small ribosomal subunit protein uS14">
    <location>
        <begin position="1"/>
        <end position="101"/>
    </location>
</feature>
<proteinExistence type="inferred from homology"/>
<accession>A3P0A0</accession>